<proteinExistence type="evidence at protein level"/>
<organism>
    <name type="scientific">Homo sapiens</name>
    <name type="common">Human</name>
    <dbReference type="NCBI Taxonomy" id="9606"/>
    <lineage>
        <taxon>Eukaryota</taxon>
        <taxon>Metazoa</taxon>
        <taxon>Chordata</taxon>
        <taxon>Craniata</taxon>
        <taxon>Vertebrata</taxon>
        <taxon>Euteleostomi</taxon>
        <taxon>Mammalia</taxon>
        <taxon>Eutheria</taxon>
        <taxon>Euarchontoglires</taxon>
        <taxon>Primates</taxon>
        <taxon>Haplorrhini</taxon>
        <taxon>Catarrhini</taxon>
        <taxon>Hominidae</taxon>
        <taxon>Homo</taxon>
    </lineage>
</organism>
<comment type="function">
    <text>May be involved in transcriptional regulation.</text>
</comment>
<comment type="subcellular location">
    <subcellularLocation>
        <location evidence="6">Nucleus</location>
    </subcellularLocation>
</comment>
<comment type="alternative products">
    <event type="alternative splicing"/>
    <isoform>
        <id>Q9NUA8-1</id>
        <name>1</name>
        <sequence type="displayed"/>
    </isoform>
    <isoform>
        <id>Q9NUA8-2</id>
        <name>2</name>
        <sequence type="described" ref="VSP_007757 VSP_007758 VSP_007759"/>
    </isoform>
</comment>
<comment type="similarity">
    <text evidence="6">Belongs to the krueppel C2H2-type zinc-finger protein family.</text>
</comment>
<comment type="sequence caution" evidence="6">
    <conflict type="erroneous initiation">
        <sequence resource="EMBL-CDS" id="BAA32323"/>
    </conflict>
</comment>
<feature type="chain" id="PRO_0000047745" description="Zinc finger and BTB domain-containing protein 40">
    <location>
        <begin position="1"/>
        <end position="1239"/>
    </location>
</feature>
<feature type="domain" description="BTB" evidence="1">
    <location>
        <begin position="24"/>
        <end position="87"/>
    </location>
</feature>
<feature type="zinc finger region" description="C2H2-type 1" evidence="2">
    <location>
        <begin position="807"/>
        <end position="830"/>
    </location>
</feature>
<feature type="zinc finger region" description="C2H2-type 2" evidence="2">
    <location>
        <begin position="836"/>
        <end position="858"/>
    </location>
</feature>
<feature type="zinc finger region" description="C2H2-type 3" evidence="2">
    <location>
        <begin position="864"/>
        <end position="887"/>
    </location>
</feature>
<feature type="zinc finger region" description="C2H2-type 4" evidence="2">
    <location>
        <begin position="893"/>
        <end position="915"/>
    </location>
</feature>
<feature type="zinc finger region" description="C2H2-type 5" evidence="2">
    <location>
        <begin position="921"/>
        <end position="944"/>
    </location>
</feature>
<feature type="zinc finger region" description="C2H2-type 6" evidence="2">
    <location>
        <begin position="950"/>
        <end position="973"/>
    </location>
</feature>
<feature type="zinc finger region" description="C2H2-type 7" evidence="2">
    <location>
        <begin position="978"/>
        <end position="1000"/>
    </location>
</feature>
<feature type="zinc finger region" description="C2H2-type 8" evidence="2">
    <location>
        <begin position="1006"/>
        <end position="1029"/>
    </location>
</feature>
<feature type="zinc finger region" description="C2H2-type 9" evidence="2">
    <location>
        <begin position="1046"/>
        <end position="1069"/>
    </location>
</feature>
<feature type="zinc finger region" description="C2H2-type 10" evidence="2">
    <location>
        <begin position="1075"/>
        <end position="1098"/>
    </location>
</feature>
<feature type="zinc finger region" description="C2H2-type 11; atypical" evidence="2">
    <location>
        <begin position="1104"/>
        <end position="1127"/>
    </location>
</feature>
<feature type="zinc finger region" description="C2H2-type 12" evidence="2">
    <location>
        <begin position="1135"/>
        <end position="1158"/>
    </location>
</feature>
<feature type="region of interest" description="Disordered" evidence="3">
    <location>
        <begin position="130"/>
        <end position="231"/>
    </location>
</feature>
<feature type="region of interest" description="Disordered" evidence="3">
    <location>
        <begin position="687"/>
        <end position="732"/>
    </location>
</feature>
<feature type="region of interest" description="Disordered" evidence="3">
    <location>
        <begin position="779"/>
        <end position="801"/>
    </location>
</feature>
<feature type="compositionally biased region" description="Basic and acidic residues" evidence="3">
    <location>
        <begin position="136"/>
        <end position="145"/>
    </location>
</feature>
<feature type="compositionally biased region" description="Polar residues" evidence="3">
    <location>
        <begin position="181"/>
        <end position="199"/>
    </location>
</feature>
<feature type="compositionally biased region" description="Low complexity" evidence="3">
    <location>
        <begin position="200"/>
        <end position="212"/>
    </location>
</feature>
<feature type="compositionally biased region" description="Basic and acidic residues" evidence="3">
    <location>
        <begin position="687"/>
        <end position="703"/>
    </location>
</feature>
<feature type="compositionally biased region" description="Polar residues" evidence="3">
    <location>
        <begin position="705"/>
        <end position="719"/>
    </location>
</feature>
<feature type="modified residue" description="Phosphoserine" evidence="8">
    <location>
        <position position="190"/>
    </location>
</feature>
<feature type="modified residue" description="Phosphoserine" evidence="7">
    <location>
        <position position="703"/>
    </location>
</feature>
<feature type="cross-link" description="Glycyl lysine isopeptide (Lys-Gly) (interchain with G-Cter in SUMO2)" evidence="9">
    <location>
        <position position="1066"/>
    </location>
</feature>
<feature type="splice variant" id="VSP_007757" description="In isoform 2." evidence="5">
    <location>
        <begin position="116"/>
        <end position="162"/>
    </location>
</feature>
<feature type="splice variant" id="VSP_007758" description="In isoform 2." evidence="5">
    <original>EIKGPQKEMIVK</original>
    <variation>NCCVPVEAVPIF</variation>
    <location>
        <begin position="270"/>
        <end position="281"/>
    </location>
</feature>
<feature type="splice variant" id="VSP_007759" description="In isoform 2." evidence="5">
    <location>
        <begin position="282"/>
        <end position="1239"/>
    </location>
</feature>
<feature type="sequence variant" id="VAR_052920" description="In dbSNP:rs6659222.">
    <original>A</original>
    <variation>T</variation>
    <location>
        <position position="225"/>
    </location>
</feature>
<feature type="sequence variant" id="VAR_052921" description="In dbSNP:rs36115661.">
    <original>M</original>
    <variation>I</variation>
    <location>
        <position position="267"/>
    </location>
</feature>
<feature type="sequence variant" id="VAR_052922" description="In dbSNP:rs209729." evidence="4">
    <original>Y</original>
    <variation>C</variation>
    <location>
        <position position="595"/>
    </location>
</feature>
<feature type="sequence variant" id="VAR_052923" description="In dbSNP:rs209720." evidence="4">
    <original>V</original>
    <variation>M</variation>
    <location>
        <position position="997"/>
    </location>
</feature>
<feature type="sequence conflict" description="In Ref. 1; BAA32323." evidence="6" ref="1">
    <original>A</original>
    <variation>P</variation>
    <location>
        <position position="218"/>
    </location>
</feature>
<name>ZBT40_HUMAN</name>
<keyword id="KW-0025">Alternative splicing</keyword>
<keyword id="KW-0238">DNA-binding</keyword>
<keyword id="KW-1017">Isopeptide bond</keyword>
<keyword id="KW-0479">Metal-binding</keyword>
<keyword id="KW-0539">Nucleus</keyword>
<keyword id="KW-0597">Phosphoprotein</keyword>
<keyword id="KW-1267">Proteomics identification</keyword>
<keyword id="KW-1185">Reference proteome</keyword>
<keyword id="KW-0677">Repeat</keyword>
<keyword id="KW-0804">Transcription</keyword>
<keyword id="KW-0805">Transcription regulation</keyword>
<keyword id="KW-0832">Ubl conjugation</keyword>
<keyword id="KW-0862">Zinc</keyword>
<keyword id="KW-0863">Zinc-finger</keyword>
<dbReference type="EMBL" id="AB007947">
    <property type="protein sequence ID" value="BAA32323.2"/>
    <property type="status" value="ALT_INIT"/>
    <property type="molecule type" value="mRNA"/>
</dbReference>
<dbReference type="EMBL" id="AK095273">
    <property type="protein sequence ID" value="BAC04518.1"/>
    <property type="molecule type" value="mRNA"/>
</dbReference>
<dbReference type="EMBL" id="AL035703">
    <property type="status" value="NOT_ANNOTATED_CDS"/>
    <property type="molecule type" value="Genomic_DNA"/>
</dbReference>
<dbReference type="CCDS" id="CCDS224.1">
    <molecule id="Q9NUA8-1"/>
</dbReference>
<dbReference type="RefSeq" id="NP_001077090.1">
    <molecule id="Q9NUA8-1"/>
    <property type="nucleotide sequence ID" value="NM_001083621.2"/>
</dbReference>
<dbReference type="RefSeq" id="NP_055685.3">
    <molecule id="Q9NUA8-1"/>
    <property type="nucleotide sequence ID" value="NM_014870.3"/>
</dbReference>
<dbReference type="RefSeq" id="XP_011540801.1">
    <molecule id="Q9NUA8-1"/>
    <property type="nucleotide sequence ID" value="XM_011542499.3"/>
</dbReference>
<dbReference type="BioGRID" id="115251">
    <property type="interactions" value="23"/>
</dbReference>
<dbReference type="FunCoup" id="Q9NUA8">
    <property type="interactions" value="3150"/>
</dbReference>
<dbReference type="IntAct" id="Q9NUA8">
    <property type="interactions" value="16"/>
</dbReference>
<dbReference type="MINT" id="Q9NUA8"/>
<dbReference type="STRING" id="9606.ENSP00000384527"/>
<dbReference type="ChEMBL" id="CHEMBL5069378"/>
<dbReference type="GlyGen" id="Q9NUA8">
    <property type="glycosylation" value="5 sites, 1 N-linked glycan (1 site), 1 O-linked glycan (2 sites)"/>
</dbReference>
<dbReference type="iPTMnet" id="Q9NUA8"/>
<dbReference type="PhosphoSitePlus" id="Q9NUA8"/>
<dbReference type="BioMuta" id="ZBTB40"/>
<dbReference type="DMDM" id="68847213"/>
<dbReference type="jPOST" id="Q9NUA8"/>
<dbReference type="MassIVE" id="Q9NUA8"/>
<dbReference type="PaxDb" id="9606-ENSP00000384527"/>
<dbReference type="PeptideAtlas" id="Q9NUA8"/>
<dbReference type="ProteomicsDB" id="82658">
    <molecule id="Q9NUA8-1"/>
</dbReference>
<dbReference type="ProteomicsDB" id="82659">
    <molecule id="Q9NUA8-2"/>
</dbReference>
<dbReference type="Pumba" id="Q9NUA8"/>
<dbReference type="TopDownProteomics" id="Q9NUA8-2">
    <molecule id="Q9NUA8-2"/>
</dbReference>
<dbReference type="Antibodypedia" id="30081">
    <property type="antibodies" value="179 antibodies from 30 providers"/>
</dbReference>
<dbReference type="DNASU" id="9923"/>
<dbReference type="Ensembl" id="ENST00000375647.5">
    <molecule id="Q9NUA8-1"/>
    <property type="protein sequence ID" value="ENSP00000364798.4"/>
    <property type="gene ID" value="ENSG00000184677.18"/>
</dbReference>
<dbReference type="Ensembl" id="ENST00000404138.5">
    <molecule id="Q9NUA8-1"/>
    <property type="protein sequence ID" value="ENSP00000384527.1"/>
    <property type="gene ID" value="ENSG00000184677.18"/>
</dbReference>
<dbReference type="GeneID" id="9923"/>
<dbReference type="KEGG" id="hsa:9923"/>
<dbReference type="MANE-Select" id="ENST00000375647.5">
    <property type="protein sequence ID" value="ENSP00000364798.4"/>
    <property type="RefSeq nucleotide sequence ID" value="NM_014870.4"/>
    <property type="RefSeq protein sequence ID" value="NP_055685.3"/>
</dbReference>
<dbReference type="UCSC" id="uc001bft.2">
    <molecule id="Q9NUA8-1"/>
    <property type="organism name" value="human"/>
</dbReference>
<dbReference type="AGR" id="HGNC:29045"/>
<dbReference type="CTD" id="9923"/>
<dbReference type="DisGeNET" id="9923"/>
<dbReference type="GeneCards" id="ZBTB40"/>
<dbReference type="HGNC" id="HGNC:29045">
    <property type="gene designation" value="ZBTB40"/>
</dbReference>
<dbReference type="HPA" id="ENSG00000184677">
    <property type="expression patterns" value="Low tissue specificity"/>
</dbReference>
<dbReference type="MalaCards" id="ZBTB40"/>
<dbReference type="MIM" id="612106">
    <property type="type" value="gene"/>
</dbReference>
<dbReference type="neXtProt" id="NX_Q9NUA8"/>
<dbReference type="OpenTargets" id="ENSG00000184677"/>
<dbReference type="PharmGKB" id="PA142670544"/>
<dbReference type="VEuPathDB" id="HostDB:ENSG00000184677"/>
<dbReference type="eggNOG" id="KOG1721">
    <property type="taxonomic scope" value="Eukaryota"/>
</dbReference>
<dbReference type="GeneTree" id="ENSGT00930000151052"/>
<dbReference type="InParanoid" id="Q9NUA8"/>
<dbReference type="OMA" id="CHLLCSI"/>
<dbReference type="OrthoDB" id="9931612at2759"/>
<dbReference type="PAN-GO" id="Q9NUA8">
    <property type="GO annotations" value="4 GO annotations based on evolutionary models"/>
</dbReference>
<dbReference type="PhylomeDB" id="Q9NUA8"/>
<dbReference type="TreeFam" id="TF350897"/>
<dbReference type="PathwayCommons" id="Q9NUA8"/>
<dbReference type="SignaLink" id="Q9NUA8"/>
<dbReference type="BioGRID-ORCS" id="9923">
    <property type="hits" value="15 hits in 1212 CRISPR screens"/>
</dbReference>
<dbReference type="ChiTaRS" id="ZBTB40">
    <property type="organism name" value="human"/>
</dbReference>
<dbReference type="GeneWiki" id="ZBTB40"/>
<dbReference type="GenomeRNAi" id="9923"/>
<dbReference type="Pharos" id="Q9NUA8">
    <property type="development level" value="Tbio"/>
</dbReference>
<dbReference type="PRO" id="PR:Q9NUA8"/>
<dbReference type="Proteomes" id="UP000005640">
    <property type="component" value="Chromosome 1"/>
</dbReference>
<dbReference type="RNAct" id="Q9NUA8">
    <property type="molecule type" value="protein"/>
</dbReference>
<dbReference type="Bgee" id="ENSG00000184677">
    <property type="expression patterns" value="Expressed in dorsal motor nucleus of vagus nerve and 203 other cell types or tissues"/>
</dbReference>
<dbReference type="ExpressionAtlas" id="Q9NUA8">
    <property type="expression patterns" value="baseline and differential"/>
</dbReference>
<dbReference type="GO" id="GO:0005634">
    <property type="term" value="C:nucleus"/>
    <property type="evidence" value="ECO:0000314"/>
    <property type="project" value="UniProtKB"/>
</dbReference>
<dbReference type="GO" id="GO:0003677">
    <property type="term" value="F:DNA binding"/>
    <property type="evidence" value="ECO:0007669"/>
    <property type="project" value="UniProtKB-KW"/>
</dbReference>
<dbReference type="GO" id="GO:0000981">
    <property type="term" value="F:DNA-binding transcription factor activity, RNA polymerase II-specific"/>
    <property type="evidence" value="ECO:0000318"/>
    <property type="project" value="GO_Central"/>
</dbReference>
<dbReference type="GO" id="GO:0008270">
    <property type="term" value="F:zinc ion binding"/>
    <property type="evidence" value="ECO:0007669"/>
    <property type="project" value="UniProtKB-KW"/>
</dbReference>
<dbReference type="GO" id="GO:0030282">
    <property type="term" value="P:bone mineralization"/>
    <property type="evidence" value="ECO:0000303"/>
    <property type="project" value="UniProtKB"/>
</dbReference>
<dbReference type="GO" id="GO:0006974">
    <property type="term" value="P:DNA damage response"/>
    <property type="evidence" value="ECO:0000314"/>
    <property type="project" value="UniProtKB"/>
</dbReference>
<dbReference type="GO" id="GO:0006357">
    <property type="term" value="P:regulation of transcription by RNA polymerase II"/>
    <property type="evidence" value="ECO:0000318"/>
    <property type="project" value="GO_Central"/>
</dbReference>
<dbReference type="CDD" id="cd18225">
    <property type="entry name" value="BTB_POZ_ZBTB40"/>
    <property type="match status" value="1"/>
</dbReference>
<dbReference type="FunFam" id="3.30.160.60:FF:000645">
    <property type="entry name" value="Zinc finger and BTB domain containing 40"/>
    <property type="match status" value="1"/>
</dbReference>
<dbReference type="FunFam" id="3.30.160.60:FF:000696">
    <property type="entry name" value="Zinc finger and BTB domain containing 40"/>
    <property type="match status" value="1"/>
</dbReference>
<dbReference type="FunFam" id="3.30.160.60:FF:000917">
    <property type="entry name" value="Zinc finger and BTB domain containing 40"/>
    <property type="match status" value="1"/>
</dbReference>
<dbReference type="FunFam" id="3.30.160.60:FF:000954">
    <property type="entry name" value="Zinc finger and BTB domain containing 40"/>
    <property type="match status" value="1"/>
</dbReference>
<dbReference type="FunFam" id="3.30.160.60:FF:001640">
    <property type="entry name" value="Zinc finger and BTB domain containing 40"/>
    <property type="match status" value="1"/>
</dbReference>
<dbReference type="FunFam" id="3.30.710.10:FF:000058">
    <property type="entry name" value="Zinc finger and BTB domain containing 40"/>
    <property type="match status" value="1"/>
</dbReference>
<dbReference type="FunFam" id="3.30.160.60:FF:001792">
    <property type="entry name" value="Zinc finger and BTB domain-containing 40"/>
    <property type="match status" value="1"/>
</dbReference>
<dbReference type="FunFam" id="3.30.160.60:FF:003097">
    <property type="entry name" value="Zinc finger and BTB domain-containing 40"/>
    <property type="match status" value="1"/>
</dbReference>
<dbReference type="FunFam" id="3.30.160.60:FF:000909">
    <property type="entry name" value="zinc finger and BTB domain-containing protein 40"/>
    <property type="match status" value="1"/>
</dbReference>
<dbReference type="FunFam" id="3.30.160.60:FF:001061">
    <property type="entry name" value="zinc finger and BTB domain-containing protein 40"/>
    <property type="match status" value="1"/>
</dbReference>
<dbReference type="FunFam" id="3.30.160.60:FF:001143">
    <property type="entry name" value="zinc finger and BTB domain-containing protein 40"/>
    <property type="match status" value="1"/>
</dbReference>
<dbReference type="Gene3D" id="3.30.160.60">
    <property type="entry name" value="Classic Zinc Finger"/>
    <property type="match status" value="10"/>
</dbReference>
<dbReference type="Gene3D" id="3.30.710.10">
    <property type="entry name" value="Potassium Channel Kv1.1, Chain A"/>
    <property type="match status" value="1"/>
</dbReference>
<dbReference type="InterPro" id="IPR000210">
    <property type="entry name" value="BTB/POZ_dom"/>
</dbReference>
<dbReference type="InterPro" id="IPR011333">
    <property type="entry name" value="SKP1/BTB/POZ_sf"/>
</dbReference>
<dbReference type="InterPro" id="IPR030404">
    <property type="entry name" value="ZBTB40_BTB_POZ_dom"/>
</dbReference>
<dbReference type="InterPro" id="IPR036236">
    <property type="entry name" value="Znf_C2H2_sf"/>
</dbReference>
<dbReference type="InterPro" id="IPR013087">
    <property type="entry name" value="Znf_C2H2_type"/>
</dbReference>
<dbReference type="PANTHER" id="PTHR24394">
    <property type="entry name" value="ZINC FINGER PROTEIN"/>
    <property type="match status" value="1"/>
</dbReference>
<dbReference type="PANTHER" id="PTHR24394:SF44">
    <property type="entry name" value="ZINC FINGER PROTEIN 271-LIKE"/>
    <property type="match status" value="1"/>
</dbReference>
<dbReference type="Pfam" id="PF00651">
    <property type="entry name" value="BTB"/>
    <property type="match status" value="1"/>
</dbReference>
<dbReference type="Pfam" id="PF00096">
    <property type="entry name" value="zf-C2H2"/>
    <property type="match status" value="4"/>
</dbReference>
<dbReference type="Pfam" id="PF12874">
    <property type="entry name" value="zf-met"/>
    <property type="match status" value="1"/>
</dbReference>
<dbReference type="SMART" id="SM00225">
    <property type="entry name" value="BTB"/>
    <property type="match status" value="1"/>
</dbReference>
<dbReference type="SMART" id="SM00355">
    <property type="entry name" value="ZnF_C2H2"/>
    <property type="match status" value="14"/>
</dbReference>
<dbReference type="SUPFAM" id="SSF57667">
    <property type="entry name" value="beta-beta-alpha zinc fingers"/>
    <property type="match status" value="5"/>
</dbReference>
<dbReference type="SUPFAM" id="SSF54695">
    <property type="entry name" value="POZ domain"/>
    <property type="match status" value="1"/>
</dbReference>
<dbReference type="PROSITE" id="PS50097">
    <property type="entry name" value="BTB"/>
    <property type="match status" value="1"/>
</dbReference>
<dbReference type="PROSITE" id="PS00028">
    <property type="entry name" value="ZINC_FINGER_C2H2_1"/>
    <property type="match status" value="12"/>
</dbReference>
<dbReference type="PROSITE" id="PS50157">
    <property type="entry name" value="ZINC_FINGER_C2H2_2"/>
    <property type="match status" value="11"/>
</dbReference>
<sequence length="1239" mass="138118">MELPNYSRQLLQQLYTLCKEQQFCDCTISIGTIYFRAHKLVLAAASLLFKTLLDNTDTISIDASVVSPEEFALLLEMMYTGKLPVGKHNFSKIISLADSLQMFDVAVSCKNLLTSLVNCSVQGQVVRDVSAPSSETFRKEPEKPQVEILSSEGAGEPHSSPELAATPGGPVKAETEEAAHSVSQEMSVNSPTAQESQRNAETPAETPTTAEACSPSPAVQTFSEAKKTSTEPGCERKHYQLNFLLENEGVFSDALMVTQDVLKKLEMCSEIKGPQKEMIVKCFEGEGGHSAFQRILGKVREESLDVQTVVSLLRLYQYSNPAVKTALLDRKPEDVDTVQPKGSTEEGKTLSVLLLEHKEDLIQCVTQLRPIMESLETAKEEFLTGTEKRVILNCCEGRTPKETIENLLHRMTEEKTLTAEGLVKLLQAVKTTFPNLGLLLEKLQKSATLPSTTVQPSPDDYGTELLRRYHENLSEIFTDNQILLKMISHMTSLAPGEREVMEKLVKRDSGSGGFNSLISAVLEKQTLSATAIWQLLLVVQETKTCPLDLLMEEIRREPGADAFFRAVTTPEHATLETILRHNQLILEAIQQKIEYKLFTSEEEHLAETVKEILSIPSETASPEASLRAVLSRAMEKSVPAIEICHLLCSVHKSFPGLQPVMQELAYIGVLTKEDGEKETWKVSNKFHLEANNKEDEKAAKEDSQPGEQNDQGETGSLPGQQEKEASASPDPAKKSFICKACDKSFHFYCRLKVHMKRCRVAKSKQVQCKECSETKDSKKELDKHQLEAHGAGGEPDAPKKKKKRLPVTCDLCGREFAHASGMQYHKLTEHFDEKPFSCEECGAKFAANSTLKNHLRLHTGDRPFMCKHCLMTFTQASALAYHTKKKHSEGKMYACQYCDAVFAQSIELSRHVRTHTGDKPYVCRDCGKGFRQANGLSIHLHTFHNIEDPYDCKKCRMSFPTLQDHRKHIHEVHSKEYHPCPTCGKIFSAPSMLERHVVTHVGGKPFSCGICNKAYQQLSGLWYHNRTHHPDVFAAQNHRSSKFSSLQCSSCDKTFPNTIEHKKHIKAEHADMKFHECDQCKELFPTPALLQVHVKCQHSGSQPFRCLYCAATFRFPGALQHHVTTEHFKQSETTFPCELCGELFTSQAQLDSHLESEHPKVMSTETQAAASQMAQVIQTPEPVAPTEQVITLEETQLAGSQVFVTLPDSQASQASSELVAVTVEDLLDGTVTLICGEAK</sequence>
<accession>Q9NUA8</accession>
<accession>O75066</accession>
<accession>Q5TFU5</accession>
<accession>Q8N1R1</accession>
<evidence type="ECO:0000255" key="1">
    <source>
        <dbReference type="PROSITE-ProRule" id="PRU00037"/>
    </source>
</evidence>
<evidence type="ECO:0000255" key="2">
    <source>
        <dbReference type="PROSITE-ProRule" id="PRU00042"/>
    </source>
</evidence>
<evidence type="ECO:0000256" key="3">
    <source>
        <dbReference type="SAM" id="MobiDB-lite"/>
    </source>
</evidence>
<evidence type="ECO:0000269" key="4">
    <source>
    </source>
</evidence>
<evidence type="ECO:0000303" key="5">
    <source>
    </source>
</evidence>
<evidence type="ECO:0000305" key="6"/>
<evidence type="ECO:0007744" key="7">
    <source>
    </source>
</evidence>
<evidence type="ECO:0007744" key="8">
    <source>
    </source>
</evidence>
<evidence type="ECO:0007744" key="9">
    <source>
    </source>
</evidence>
<gene>
    <name type="primary">ZBTB40</name>
    <name type="synonym">KIAA0478</name>
</gene>
<reference key="1">
    <citation type="journal article" date="1997" name="DNA Res.">
        <title>Characterization of cDNA clones in size-fractionated cDNA libraries from human brain.</title>
        <authorList>
            <person name="Seki N."/>
            <person name="Ohira M."/>
            <person name="Nagase T."/>
            <person name="Ishikawa K."/>
            <person name="Miyajima N."/>
            <person name="Nakajima D."/>
            <person name="Nomura N."/>
            <person name="Ohara O."/>
        </authorList>
    </citation>
    <scope>NUCLEOTIDE SEQUENCE [LARGE SCALE MRNA] (ISOFORM 1)</scope>
    <scope>VARIANTS CYS-595 AND MET-997</scope>
    <source>
        <tissue>Brain</tissue>
    </source>
</reference>
<reference key="2">
    <citation type="journal article" date="2002" name="DNA Res.">
        <title>Construction of expression-ready cDNA clones for KIAA genes: manual curation of 330 KIAA cDNA clones.</title>
        <authorList>
            <person name="Nakajima D."/>
            <person name="Okazaki N."/>
            <person name="Yamakawa H."/>
            <person name="Kikuno R."/>
            <person name="Ohara O."/>
            <person name="Nagase T."/>
        </authorList>
    </citation>
    <scope>SEQUENCE REVISION</scope>
</reference>
<reference key="3">
    <citation type="journal article" date="2004" name="Nat. Genet.">
        <title>Complete sequencing and characterization of 21,243 full-length human cDNAs.</title>
        <authorList>
            <person name="Ota T."/>
            <person name="Suzuki Y."/>
            <person name="Nishikawa T."/>
            <person name="Otsuki T."/>
            <person name="Sugiyama T."/>
            <person name="Irie R."/>
            <person name="Wakamatsu A."/>
            <person name="Hayashi K."/>
            <person name="Sato H."/>
            <person name="Nagai K."/>
            <person name="Kimura K."/>
            <person name="Makita H."/>
            <person name="Sekine M."/>
            <person name="Obayashi M."/>
            <person name="Nishi T."/>
            <person name="Shibahara T."/>
            <person name="Tanaka T."/>
            <person name="Ishii S."/>
            <person name="Yamamoto J."/>
            <person name="Saito K."/>
            <person name="Kawai Y."/>
            <person name="Isono Y."/>
            <person name="Nakamura Y."/>
            <person name="Nagahari K."/>
            <person name="Murakami K."/>
            <person name="Yasuda T."/>
            <person name="Iwayanagi T."/>
            <person name="Wagatsuma M."/>
            <person name="Shiratori A."/>
            <person name="Sudo H."/>
            <person name="Hosoiri T."/>
            <person name="Kaku Y."/>
            <person name="Kodaira H."/>
            <person name="Kondo H."/>
            <person name="Sugawara M."/>
            <person name="Takahashi M."/>
            <person name="Kanda K."/>
            <person name="Yokoi T."/>
            <person name="Furuya T."/>
            <person name="Kikkawa E."/>
            <person name="Omura Y."/>
            <person name="Abe K."/>
            <person name="Kamihara K."/>
            <person name="Katsuta N."/>
            <person name="Sato K."/>
            <person name="Tanikawa M."/>
            <person name="Yamazaki M."/>
            <person name="Ninomiya K."/>
            <person name="Ishibashi T."/>
            <person name="Yamashita H."/>
            <person name="Murakawa K."/>
            <person name="Fujimori K."/>
            <person name="Tanai H."/>
            <person name="Kimata M."/>
            <person name="Watanabe M."/>
            <person name="Hiraoka S."/>
            <person name="Chiba Y."/>
            <person name="Ishida S."/>
            <person name="Ono Y."/>
            <person name="Takiguchi S."/>
            <person name="Watanabe S."/>
            <person name="Yosida M."/>
            <person name="Hotuta T."/>
            <person name="Kusano J."/>
            <person name="Kanehori K."/>
            <person name="Takahashi-Fujii A."/>
            <person name="Hara H."/>
            <person name="Tanase T.-O."/>
            <person name="Nomura Y."/>
            <person name="Togiya S."/>
            <person name="Komai F."/>
            <person name="Hara R."/>
            <person name="Takeuchi K."/>
            <person name="Arita M."/>
            <person name="Imose N."/>
            <person name="Musashino K."/>
            <person name="Yuuki H."/>
            <person name="Oshima A."/>
            <person name="Sasaki N."/>
            <person name="Aotsuka S."/>
            <person name="Yoshikawa Y."/>
            <person name="Matsunawa H."/>
            <person name="Ichihara T."/>
            <person name="Shiohata N."/>
            <person name="Sano S."/>
            <person name="Moriya S."/>
            <person name="Momiyama H."/>
            <person name="Satoh N."/>
            <person name="Takami S."/>
            <person name="Terashima Y."/>
            <person name="Suzuki O."/>
            <person name="Nakagawa S."/>
            <person name="Senoh A."/>
            <person name="Mizoguchi H."/>
            <person name="Goto Y."/>
            <person name="Shimizu F."/>
            <person name="Wakebe H."/>
            <person name="Hishigaki H."/>
            <person name="Watanabe T."/>
            <person name="Sugiyama A."/>
            <person name="Takemoto M."/>
            <person name="Kawakami B."/>
            <person name="Yamazaki M."/>
            <person name="Watanabe K."/>
            <person name="Kumagai A."/>
            <person name="Itakura S."/>
            <person name="Fukuzumi Y."/>
            <person name="Fujimori Y."/>
            <person name="Komiyama M."/>
            <person name="Tashiro H."/>
            <person name="Tanigami A."/>
            <person name="Fujiwara T."/>
            <person name="Ono T."/>
            <person name="Yamada K."/>
            <person name="Fujii Y."/>
            <person name="Ozaki K."/>
            <person name="Hirao M."/>
            <person name="Ohmori Y."/>
            <person name="Kawabata A."/>
            <person name="Hikiji T."/>
            <person name="Kobatake N."/>
            <person name="Inagaki H."/>
            <person name="Ikema Y."/>
            <person name="Okamoto S."/>
            <person name="Okitani R."/>
            <person name="Kawakami T."/>
            <person name="Noguchi S."/>
            <person name="Itoh T."/>
            <person name="Shigeta K."/>
            <person name="Senba T."/>
            <person name="Matsumura K."/>
            <person name="Nakajima Y."/>
            <person name="Mizuno T."/>
            <person name="Morinaga M."/>
            <person name="Sasaki M."/>
            <person name="Togashi T."/>
            <person name="Oyama M."/>
            <person name="Hata H."/>
            <person name="Watanabe M."/>
            <person name="Komatsu T."/>
            <person name="Mizushima-Sugano J."/>
            <person name="Satoh T."/>
            <person name="Shirai Y."/>
            <person name="Takahashi Y."/>
            <person name="Nakagawa K."/>
            <person name="Okumura K."/>
            <person name="Nagase T."/>
            <person name="Nomura N."/>
            <person name="Kikuchi H."/>
            <person name="Masuho Y."/>
            <person name="Yamashita R."/>
            <person name="Nakai K."/>
            <person name="Yada T."/>
            <person name="Nakamura Y."/>
            <person name="Ohara O."/>
            <person name="Isogai T."/>
            <person name="Sugano S."/>
        </authorList>
    </citation>
    <scope>NUCLEOTIDE SEQUENCE [LARGE SCALE MRNA] (ISOFORM 2)</scope>
    <source>
        <tissue>Tongue</tissue>
    </source>
</reference>
<reference key="4">
    <citation type="journal article" date="2006" name="Nature">
        <title>The DNA sequence and biological annotation of human chromosome 1.</title>
        <authorList>
            <person name="Gregory S.G."/>
            <person name="Barlow K.F."/>
            <person name="McLay K.E."/>
            <person name="Kaul R."/>
            <person name="Swarbreck D."/>
            <person name="Dunham A."/>
            <person name="Scott C.E."/>
            <person name="Howe K.L."/>
            <person name="Woodfine K."/>
            <person name="Spencer C.C.A."/>
            <person name="Jones M.C."/>
            <person name="Gillson C."/>
            <person name="Searle S."/>
            <person name="Zhou Y."/>
            <person name="Kokocinski F."/>
            <person name="McDonald L."/>
            <person name="Evans R."/>
            <person name="Phillips K."/>
            <person name="Atkinson A."/>
            <person name="Cooper R."/>
            <person name="Jones C."/>
            <person name="Hall R.E."/>
            <person name="Andrews T.D."/>
            <person name="Lloyd C."/>
            <person name="Ainscough R."/>
            <person name="Almeida J.P."/>
            <person name="Ambrose K.D."/>
            <person name="Anderson F."/>
            <person name="Andrew R.W."/>
            <person name="Ashwell R.I.S."/>
            <person name="Aubin K."/>
            <person name="Babbage A.K."/>
            <person name="Bagguley C.L."/>
            <person name="Bailey J."/>
            <person name="Beasley H."/>
            <person name="Bethel G."/>
            <person name="Bird C.P."/>
            <person name="Bray-Allen S."/>
            <person name="Brown J.Y."/>
            <person name="Brown A.J."/>
            <person name="Buckley D."/>
            <person name="Burton J."/>
            <person name="Bye J."/>
            <person name="Carder C."/>
            <person name="Chapman J.C."/>
            <person name="Clark S.Y."/>
            <person name="Clarke G."/>
            <person name="Clee C."/>
            <person name="Cobley V."/>
            <person name="Collier R.E."/>
            <person name="Corby N."/>
            <person name="Coville G.J."/>
            <person name="Davies J."/>
            <person name="Deadman R."/>
            <person name="Dunn M."/>
            <person name="Earthrowl M."/>
            <person name="Ellington A.G."/>
            <person name="Errington H."/>
            <person name="Frankish A."/>
            <person name="Frankland J."/>
            <person name="French L."/>
            <person name="Garner P."/>
            <person name="Garnett J."/>
            <person name="Gay L."/>
            <person name="Ghori M.R.J."/>
            <person name="Gibson R."/>
            <person name="Gilby L.M."/>
            <person name="Gillett W."/>
            <person name="Glithero R.J."/>
            <person name="Grafham D.V."/>
            <person name="Griffiths C."/>
            <person name="Griffiths-Jones S."/>
            <person name="Grocock R."/>
            <person name="Hammond S."/>
            <person name="Harrison E.S.I."/>
            <person name="Hart E."/>
            <person name="Haugen E."/>
            <person name="Heath P.D."/>
            <person name="Holmes S."/>
            <person name="Holt K."/>
            <person name="Howden P.J."/>
            <person name="Hunt A.R."/>
            <person name="Hunt S.E."/>
            <person name="Hunter G."/>
            <person name="Isherwood J."/>
            <person name="James R."/>
            <person name="Johnson C."/>
            <person name="Johnson D."/>
            <person name="Joy A."/>
            <person name="Kay M."/>
            <person name="Kershaw J.K."/>
            <person name="Kibukawa M."/>
            <person name="Kimberley A.M."/>
            <person name="King A."/>
            <person name="Knights A.J."/>
            <person name="Lad H."/>
            <person name="Laird G."/>
            <person name="Lawlor S."/>
            <person name="Leongamornlert D.A."/>
            <person name="Lloyd D.M."/>
            <person name="Loveland J."/>
            <person name="Lovell J."/>
            <person name="Lush M.J."/>
            <person name="Lyne R."/>
            <person name="Martin S."/>
            <person name="Mashreghi-Mohammadi M."/>
            <person name="Matthews L."/>
            <person name="Matthews N.S.W."/>
            <person name="McLaren S."/>
            <person name="Milne S."/>
            <person name="Mistry S."/>
            <person name="Moore M.J.F."/>
            <person name="Nickerson T."/>
            <person name="O'Dell C.N."/>
            <person name="Oliver K."/>
            <person name="Palmeiri A."/>
            <person name="Palmer S.A."/>
            <person name="Parker A."/>
            <person name="Patel D."/>
            <person name="Pearce A.V."/>
            <person name="Peck A.I."/>
            <person name="Pelan S."/>
            <person name="Phelps K."/>
            <person name="Phillimore B.J."/>
            <person name="Plumb R."/>
            <person name="Rajan J."/>
            <person name="Raymond C."/>
            <person name="Rouse G."/>
            <person name="Saenphimmachak C."/>
            <person name="Sehra H.K."/>
            <person name="Sheridan E."/>
            <person name="Shownkeen R."/>
            <person name="Sims S."/>
            <person name="Skuce C.D."/>
            <person name="Smith M."/>
            <person name="Steward C."/>
            <person name="Subramanian S."/>
            <person name="Sycamore N."/>
            <person name="Tracey A."/>
            <person name="Tromans A."/>
            <person name="Van Helmond Z."/>
            <person name="Wall M."/>
            <person name="Wallis J.M."/>
            <person name="White S."/>
            <person name="Whitehead S.L."/>
            <person name="Wilkinson J.E."/>
            <person name="Willey D.L."/>
            <person name="Williams H."/>
            <person name="Wilming L."/>
            <person name="Wray P.W."/>
            <person name="Wu Z."/>
            <person name="Coulson A."/>
            <person name="Vaudin M."/>
            <person name="Sulston J.E."/>
            <person name="Durbin R.M."/>
            <person name="Hubbard T."/>
            <person name="Wooster R."/>
            <person name="Dunham I."/>
            <person name="Carter N.P."/>
            <person name="McVean G."/>
            <person name="Ross M.T."/>
            <person name="Harrow J."/>
            <person name="Olson M.V."/>
            <person name="Beck S."/>
            <person name="Rogers J."/>
            <person name="Bentley D.R."/>
        </authorList>
    </citation>
    <scope>NUCLEOTIDE SEQUENCE [LARGE SCALE GENOMIC DNA]</scope>
</reference>
<reference key="5">
    <citation type="journal article" date="2007" name="Science">
        <title>ATM and ATR substrate analysis reveals extensive protein networks responsive to DNA damage.</title>
        <authorList>
            <person name="Matsuoka S."/>
            <person name="Ballif B.A."/>
            <person name="Smogorzewska A."/>
            <person name="McDonald E.R. III"/>
            <person name="Hurov K.E."/>
            <person name="Luo J."/>
            <person name="Bakalarski C.E."/>
            <person name="Zhao Z."/>
            <person name="Solimini N."/>
            <person name="Lerenthal Y."/>
            <person name="Shiloh Y."/>
            <person name="Gygi S.P."/>
            <person name="Elledge S.J."/>
        </authorList>
    </citation>
    <scope>PHOSPHORYLATION [LARGE SCALE ANALYSIS] AT SER-703</scope>
    <scope>IDENTIFICATION BY MASS SPECTROMETRY [LARGE SCALE ANALYSIS]</scope>
    <source>
        <tissue>Embryonic kidney</tissue>
    </source>
</reference>
<reference key="6">
    <citation type="journal article" date="2008" name="Proc. Natl. Acad. Sci. U.S.A.">
        <title>A quantitative atlas of mitotic phosphorylation.</title>
        <authorList>
            <person name="Dephoure N."/>
            <person name="Zhou C."/>
            <person name="Villen J."/>
            <person name="Beausoleil S.A."/>
            <person name="Bakalarski C.E."/>
            <person name="Elledge S.J."/>
            <person name="Gygi S.P."/>
        </authorList>
    </citation>
    <scope>IDENTIFICATION BY MASS SPECTROMETRY [LARGE SCALE ANALYSIS]</scope>
    <source>
        <tissue>Cervix carcinoma</tissue>
    </source>
</reference>
<reference key="7">
    <citation type="journal article" date="2013" name="J. Proteome Res.">
        <title>Toward a comprehensive characterization of a human cancer cell phosphoproteome.</title>
        <authorList>
            <person name="Zhou H."/>
            <person name="Di Palma S."/>
            <person name="Preisinger C."/>
            <person name="Peng M."/>
            <person name="Polat A.N."/>
            <person name="Heck A.J."/>
            <person name="Mohammed S."/>
        </authorList>
    </citation>
    <scope>PHOSPHORYLATION [LARGE SCALE ANALYSIS] AT SER-190</scope>
    <scope>IDENTIFICATION BY MASS SPECTROMETRY [LARGE SCALE ANALYSIS]</scope>
    <source>
        <tissue>Cervix carcinoma</tissue>
        <tissue>Erythroleukemia</tissue>
    </source>
</reference>
<reference key="8">
    <citation type="journal article" date="2017" name="Nat. Struct. Mol. Biol.">
        <title>Site-specific mapping of the human SUMO proteome reveals co-modification with phosphorylation.</title>
        <authorList>
            <person name="Hendriks I.A."/>
            <person name="Lyon D."/>
            <person name="Young C."/>
            <person name="Jensen L.J."/>
            <person name="Vertegaal A.C."/>
            <person name="Nielsen M.L."/>
        </authorList>
    </citation>
    <scope>SUMOYLATION [LARGE SCALE ANALYSIS] AT LYS-1066</scope>
    <scope>IDENTIFICATION BY MASS SPECTROMETRY [LARGE SCALE ANALYSIS]</scope>
</reference>
<protein>
    <recommendedName>
        <fullName>Zinc finger and BTB domain-containing protein 40</fullName>
    </recommendedName>
</protein>